<proteinExistence type="inferred from homology"/>
<reference key="1">
    <citation type="journal article" date="2008" name="Theor. Appl. Genet.">
        <title>The complete nucleotide sequence of the cassava (Manihot esculenta) chloroplast genome and the evolution of atpF in Malpighiales: RNA editing and multiple losses of a group II intron.</title>
        <authorList>
            <person name="Daniell H."/>
            <person name="Wurdack K.J."/>
            <person name="Kanagaraj A."/>
            <person name="Lee S.-B."/>
            <person name="Saski C."/>
            <person name="Jansen R.K."/>
        </authorList>
    </citation>
    <scope>NUCLEOTIDE SEQUENCE [LARGE SCALE GENOMIC DNA]</scope>
    <source>
        <strain>cv. TME3</strain>
    </source>
</reference>
<evidence type="ECO:0000255" key="1">
    <source>
        <dbReference type="HAMAP-Rule" id="MF_00251"/>
    </source>
</evidence>
<evidence type="ECO:0000305" key="2"/>
<dbReference type="EMBL" id="EU117376">
    <property type="protein sequence ID" value="ABV66188.1"/>
    <property type="molecule type" value="Genomic_DNA"/>
</dbReference>
<dbReference type="RefSeq" id="YP_001718471.1">
    <property type="nucleotide sequence ID" value="NC_010433.1"/>
</dbReference>
<dbReference type="SMR" id="B1NWI4"/>
<dbReference type="GeneID" id="6000043"/>
<dbReference type="KEGG" id="mesc:6000043"/>
<dbReference type="GO" id="GO:0009507">
    <property type="term" value="C:chloroplast"/>
    <property type="evidence" value="ECO:0007669"/>
    <property type="project" value="UniProtKB-SubCell"/>
</dbReference>
<dbReference type="GO" id="GO:1990904">
    <property type="term" value="C:ribonucleoprotein complex"/>
    <property type="evidence" value="ECO:0007669"/>
    <property type="project" value="UniProtKB-KW"/>
</dbReference>
<dbReference type="GO" id="GO:0005840">
    <property type="term" value="C:ribosome"/>
    <property type="evidence" value="ECO:0007669"/>
    <property type="project" value="UniProtKB-KW"/>
</dbReference>
<dbReference type="GO" id="GO:0003735">
    <property type="term" value="F:structural constituent of ribosome"/>
    <property type="evidence" value="ECO:0007669"/>
    <property type="project" value="InterPro"/>
</dbReference>
<dbReference type="GO" id="GO:0006412">
    <property type="term" value="P:translation"/>
    <property type="evidence" value="ECO:0007669"/>
    <property type="project" value="UniProtKB-UniRule"/>
</dbReference>
<dbReference type="HAMAP" id="MF_00251">
    <property type="entry name" value="Ribosomal_bL36"/>
    <property type="match status" value="1"/>
</dbReference>
<dbReference type="InterPro" id="IPR000473">
    <property type="entry name" value="Ribosomal_bL36"/>
</dbReference>
<dbReference type="InterPro" id="IPR035977">
    <property type="entry name" value="Ribosomal_bL36_sp"/>
</dbReference>
<dbReference type="NCBIfam" id="TIGR01022">
    <property type="entry name" value="rpmJ_bact"/>
    <property type="match status" value="1"/>
</dbReference>
<dbReference type="PANTHER" id="PTHR42888">
    <property type="entry name" value="50S RIBOSOMAL PROTEIN L36, CHLOROPLASTIC"/>
    <property type="match status" value="1"/>
</dbReference>
<dbReference type="PANTHER" id="PTHR42888:SF1">
    <property type="entry name" value="LARGE RIBOSOMAL SUBUNIT PROTEIN BL36C"/>
    <property type="match status" value="1"/>
</dbReference>
<dbReference type="Pfam" id="PF00444">
    <property type="entry name" value="Ribosomal_L36"/>
    <property type="match status" value="1"/>
</dbReference>
<dbReference type="SUPFAM" id="SSF57840">
    <property type="entry name" value="Ribosomal protein L36"/>
    <property type="match status" value="1"/>
</dbReference>
<dbReference type="PROSITE" id="PS00828">
    <property type="entry name" value="RIBOSOMAL_L36"/>
    <property type="match status" value="1"/>
</dbReference>
<keyword id="KW-0150">Chloroplast</keyword>
<keyword id="KW-0934">Plastid</keyword>
<keyword id="KW-0687">Ribonucleoprotein</keyword>
<keyword id="KW-0689">Ribosomal protein</keyword>
<sequence length="37" mass="4521">MKIRASVRKICEKCRLIRRRGRIIVICFNPRHKQRQG</sequence>
<geneLocation type="chloroplast"/>
<accession>B1NWI4</accession>
<gene>
    <name evidence="1" type="primary">rpl36</name>
</gene>
<protein>
    <recommendedName>
        <fullName evidence="1">Large ribosomal subunit protein bL36c</fullName>
    </recommendedName>
    <alternativeName>
        <fullName evidence="2">50S ribosomal protein L36, chloroplastic</fullName>
    </alternativeName>
</protein>
<organism>
    <name type="scientific">Manihot esculenta</name>
    <name type="common">Cassava</name>
    <name type="synonym">Jatropha manihot</name>
    <dbReference type="NCBI Taxonomy" id="3983"/>
    <lineage>
        <taxon>Eukaryota</taxon>
        <taxon>Viridiplantae</taxon>
        <taxon>Streptophyta</taxon>
        <taxon>Embryophyta</taxon>
        <taxon>Tracheophyta</taxon>
        <taxon>Spermatophyta</taxon>
        <taxon>Magnoliopsida</taxon>
        <taxon>eudicotyledons</taxon>
        <taxon>Gunneridae</taxon>
        <taxon>Pentapetalae</taxon>
        <taxon>rosids</taxon>
        <taxon>fabids</taxon>
        <taxon>Malpighiales</taxon>
        <taxon>Euphorbiaceae</taxon>
        <taxon>Crotonoideae</taxon>
        <taxon>Manihoteae</taxon>
        <taxon>Manihot</taxon>
    </lineage>
</organism>
<name>RK36_MANES</name>
<feature type="chain" id="PRO_0000344770" description="Large ribosomal subunit protein bL36c">
    <location>
        <begin position="1"/>
        <end position="37"/>
    </location>
</feature>
<comment type="subcellular location">
    <subcellularLocation>
        <location>Plastid</location>
        <location>Chloroplast</location>
    </subcellularLocation>
</comment>
<comment type="similarity">
    <text evidence="1">Belongs to the bacterial ribosomal protein bL36 family.</text>
</comment>